<feature type="chain" id="PRO_0000256418" description="1-deoxy-D-xylulose-5-phosphate synthase">
    <location>
        <begin position="1"/>
        <end position="655"/>
    </location>
</feature>
<feature type="region of interest" description="Disordered" evidence="2">
    <location>
        <begin position="626"/>
        <end position="655"/>
    </location>
</feature>
<feature type="compositionally biased region" description="Basic and acidic residues" evidence="2">
    <location>
        <begin position="646"/>
        <end position="655"/>
    </location>
</feature>
<feature type="binding site" evidence="1">
    <location>
        <position position="73"/>
    </location>
    <ligand>
        <name>thiamine diphosphate</name>
        <dbReference type="ChEBI" id="CHEBI:58937"/>
    </ligand>
</feature>
<feature type="binding site" evidence="1">
    <location>
        <begin position="114"/>
        <end position="116"/>
    </location>
    <ligand>
        <name>thiamine diphosphate</name>
        <dbReference type="ChEBI" id="CHEBI:58937"/>
    </ligand>
</feature>
<feature type="binding site" evidence="1">
    <location>
        <position position="145"/>
    </location>
    <ligand>
        <name>Mg(2+)</name>
        <dbReference type="ChEBI" id="CHEBI:18420"/>
    </ligand>
</feature>
<feature type="binding site" evidence="1">
    <location>
        <begin position="146"/>
        <end position="147"/>
    </location>
    <ligand>
        <name>thiamine diphosphate</name>
        <dbReference type="ChEBI" id="CHEBI:58937"/>
    </ligand>
</feature>
<feature type="binding site" evidence="1">
    <location>
        <position position="174"/>
    </location>
    <ligand>
        <name>Mg(2+)</name>
        <dbReference type="ChEBI" id="CHEBI:18420"/>
    </ligand>
</feature>
<feature type="binding site" evidence="1">
    <location>
        <position position="174"/>
    </location>
    <ligand>
        <name>thiamine diphosphate</name>
        <dbReference type="ChEBI" id="CHEBI:58937"/>
    </ligand>
</feature>
<feature type="binding site" evidence="1">
    <location>
        <position position="285"/>
    </location>
    <ligand>
        <name>thiamine diphosphate</name>
        <dbReference type="ChEBI" id="CHEBI:58937"/>
    </ligand>
</feature>
<feature type="binding site" evidence="1">
    <location>
        <position position="367"/>
    </location>
    <ligand>
        <name>thiamine diphosphate</name>
        <dbReference type="ChEBI" id="CHEBI:58937"/>
    </ligand>
</feature>
<comment type="function">
    <text evidence="1">Catalyzes the acyloin condensation reaction between C atoms 2 and 3 of pyruvate and glyceraldehyde 3-phosphate to yield 1-deoxy-D-xylulose-5-phosphate (DXP).</text>
</comment>
<comment type="catalytic activity">
    <reaction evidence="1">
        <text>D-glyceraldehyde 3-phosphate + pyruvate + H(+) = 1-deoxy-D-xylulose 5-phosphate + CO2</text>
        <dbReference type="Rhea" id="RHEA:12605"/>
        <dbReference type="ChEBI" id="CHEBI:15361"/>
        <dbReference type="ChEBI" id="CHEBI:15378"/>
        <dbReference type="ChEBI" id="CHEBI:16526"/>
        <dbReference type="ChEBI" id="CHEBI:57792"/>
        <dbReference type="ChEBI" id="CHEBI:59776"/>
        <dbReference type="EC" id="2.2.1.7"/>
    </reaction>
</comment>
<comment type="cofactor">
    <cofactor evidence="1">
        <name>Mg(2+)</name>
        <dbReference type="ChEBI" id="CHEBI:18420"/>
    </cofactor>
    <text evidence="1">Binds 1 Mg(2+) ion per subunit.</text>
</comment>
<comment type="cofactor">
    <cofactor evidence="1">
        <name>thiamine diphosphate</name>
        <dbReference type="ChEBI" id="CHEBI:58937"/>
    </cofactor>
    <text evidence="1">Binds 1 thiamine pyrophosphate per subunit.</text>
</comment>
<comment type="pathway">
    <text evidence="1">Metabolic intermediate biosynthesis; 1-deoxy-D-xylulose 5-phosphate biosynthesis; 1-deoxy-D-xylulose 5-phosphate from D-glyceraldehyde 3-phosphate and pyruvate: step 1/1.</text>
</comment>
<comment type="subunit">
    <text evidence="1">Homodimer.</text>
</comment>
<comment type="similarity">
    <text evidence="1">Belongs to the transketolase family. DXPS subfamily.</text>
</comment>
<gene>
    <name evidence="1" type="primary">dxs</name>
    <name type="ordered locus">Francci3_1326</name>
</gene>
<organism>
    <name type="scientific">Frankia casuarinae (strain DSM 45818 / CECT 9043 / HFP020203 / CcI3)</name>
    <dbReference type="NCBI Taxonomy" id="106370"/>
    <lineage>
        <taxon>Bacteria</taxon>
        <taxon>Bacillati</taxon>
        <taxon>Actinomycetota</taxon>
        <taxon>Actinomycetes</taxon>
        <taxon>Frankiales</taxon>
        <taxon>Frankiaceae</taxon>
        <taxon>Frankia</taxon>
    </lineage>
</organism>
<sequence>MSLLSTISSPQDVKRLDHEELATLAAEIRDFLIHAVARTGGHLGPNLGAVELTLAIHRVFDSPFDRILWDTGHQSYVHKILTGRADDFSGLRQRGGLSGYPSRAESEHDIIENSHASTALSYADGLSRAYALRGEDRAVVAVVGDGALTGGMCWEALNNIAADDRPVVIVVNDNGRSYAPTIGGLADHLAALRLAPEYEQVLDVVKQVLGRTPLVGPPLFDALHGIKKGIKDVVQPQGMFEDLGLKYVGPVDGHDVVAVESALRRARDFGGPVIVHCVTRKGFGYPPAEQDDADNFHGVGIIDPATGKPVSTSKTISWTSIFSDEIVQIGSERPDVVTLTAAMLQPVGLGAFAKAYPDRVFDVGIAEQHAVTSAAGLAMGGLKPVVCLYATFLNRAFDQVLMDVALHRQPVTFVLDRAGITGEDGASHNGMWDLSFLQVVPGLAIAAPRDAPTLRAELREAVGDTDGPTVVRFPKGKVAVDVPAIDTVGGVDVLYRSPKVAQRREVLLVSIGAMAATCLEVAERVASQGIGITVVDPRWVKPLDPALIDLARAHDLVVTVEDNGRVGGVGAALAQLLRDADVDVPLRDFGIAQRFLDHGKRDEVMAEVGLAPQDLARKVVEAVAKRQPAIEDDPTSPGEAAPAGERAGEAIGDQR</sequence>
<name>DXS_FRACC</name>
<accession>Q2JDD9</accession>
<dbReference type="EC" id="2.2.1.7" evidence="1"/>
<dbReference type="EMBL" id="CP000249">
    <property type="protein sequence ID" value="ABD10703.1"/>
    <property type="molecule type" value="Genomic_DNA"/>
</dbReference>
<dbReference type="RefSeq" id="WP_011435769.1">
    <property type="nucleotide sequence ID" value="NZ_MSEA01000155.1"/>
</dbReference>
<dbReference type="SMR" id="Q2JDD9"/>
<dbReference type="STRING" id="106370.Francci3_1326"/>
<dbReference type="KEGG" id="fra:Francci3_1326"/>
<dbReference type="eggNOG" id="COG1154">
    <property type="taxonomic scope" value="Bacteria"/>
</dbReference>
<dbReference type="HOGENOM" id="CLU_009227_1_4_11"/>
<dbReference type="OrthoDB" id="9803371at2"/>
<dbReference type="PhylomeDB" id="Q2JDD9"/>
<dbReference type="UniPathway" id="UPA00064">
    <property type="reaction ID" value="UER00091"/>
</dbReference>
<dbReference type="Proteomes" id="UP000001937">
    <property type="component" value="Chromosome"/>
</dbReference>
<dbReference type="GO" id="GO:0005829">
    <property type="term" value="C:cytosol"/>
    <property type="evidence" value="ECO:0007669"/>
    <property type="project" value="TreeGrafter"/>
</dbReference>
<dbReference type="GO" id="GO:0008661">
    <property type="term" value="F:1-deoxy-D-xylulose-5-phosphate synthase activity"/>
    <property type="evidence" value="ECO:0007669"/>
    <property type="project" value="UniProtKB-UniRule"/>
</dbReference>
<dbReference type="GO" id="GO:0000287">
    <property type="term" value="F:magnesium ion binding"/>
    <property type="evidence" value="ECO:0007669"/>
    <property type="project" value="UniProtKB-UniRule"/>
</dbReference>
<dbReference type="GO" id="GO:0030976">
    <property type="term" value="F:thiamine pyrophosphate binding"/>
    <property type="evidence" value="ECO:0007669"/>
    <property type="project" value="UniProtKB-UniRule"/>
</dbReference>
<dbReference type="GO" id="GO:0052865">
    <property type="term" value="P:1-deoxy-D-xylulose 5-phosphate biosynthetic process"/>
    <property type="evidence" value="ECO:0007669"/>
    <property type="project" value="UniProtKB-UniPathway"/>
</dbReference>
<dbReference type="GO" id="GO:0019288">
    <property type="term" value="P:isopentenyl diphosphate biosynthetic process, methylerythritol 4-phosphate pathway"/>
    <property type="evidence" value="ECO:0007669"/>
    <property type="project" value="TreeGrafter"/>
</dbReference>
<dbReference type="GO" id="GO:0016114">
    <property type="term" value="P:terpenoid biosynthetic process"/>
    <property type="evidence" value="ECO:0007669"/>
    <property type="project" value="UniProtKB-UniRule"/>
</dbReference>
<dbReference type="GO" id="GO:0009228">
    <property type="term" value="P:thiamine biosynthetic process"/>
    <property type="evidence" value="ECO:0007669"/>
    <property type="project" value="UniProtKB-UniRule"/>
</dbReference>
<dbReference type="CDD" id="cd02007">
    <property type="entry name" value="TPP_DXS"/>
    <property type="match status" value="1"/>
</dbReference>
<dbReference type="CDD" id="cd07033">
    <property type="entry name" value="TPP_PYR_DXS_TK_like"/>
    <property type="match status" value="1"/>
</dbReference>
<dbReference type="FunFam" id="3.40.50.920:FF:000002">
    <property type="entry name" value="1-deoxy-D-xylulose-5-phosphate synthase"/>
    <property type="match status" value="1"/>
</dbReference>
<dbReference type="FunFam" id="3.40.50.970:FF:000005">
    <property type="entry name" value="1-deoxy-D-xylulose-5-phosphate synthase"/>
    <property type="match status" value="1"/>
</dbReference>
<dbReference type="Gene3D" id="3.40.50.920">
    <property type="match status" value="1"/>
</dbReference>
<dbReference type="Gene3D" id="3.40.50.970">
    <property type="match status" value="2"/>
</dbReference>
<dbReference type="HAMAP" id="MF_00315">
    <property type="entry name" value="DXP_synth"/>
    <property type="match status" value="1"/>
</dbReference>
<dbReference type="InterPro" id="IPR005477">
    <property type="entry name" value="Dxylulose-5-P_synthase"/>
</dbReference>
<dbReference type="InterPro" id="IPR029061">
    <property type="entry name" value="THDP-binding"/>
</dbReference>
<dbReference type="InterPro" id="IPR009014">
    <property type="entry name" value="Transketo_C/PFOR_II"/>
</dbReference>
<dbReference type="InterPro" id="IPR005475">
    <property type="entry name" value="Transketolase-like_Pyr-bd"/>
</dbReference>
<dbReference type="InterPro" id="IPR020826">
    <property type="entry name" value="Transketolase_BS"/>
</dbReference>
<dbReference type="InterPro" id="IPR033248">
    <property type="entry name" value="Transketolase_C"/>
</dbReference>
<dbReference type="InterPro" id="IPR049557">
    <property type="entry name" value="Transketolase_CS"/>
</dbReference>
<dbReference type="NCBIfam" id="TIGR00204">
    <property type="entry name" value="dxs"/>
    <property type="match status" value="1"/>
</dbReference>
<dbReference type="NCBIfam" id="NF003933">
    <property type="entry name" value="PRK05444.2-2"/>
    <property type="match status" value="1"/>
</dbReference>
<dbReference type="PANTHER" id="PTHR43322">
    <property type="entry name" value="1-D-DEOXYXYLULOSE 5-PHOSPHATE SYNTHASE-RELATED"/>
    <property type="match status" value="1"/>
</dbReference>
<dbReference type="PANTHER" id="PTHR43322:SF5">
    <property type="entry name" value="1-DEOXY-D-XYLULOSE-5-PHOSPHATE SYNTHASE, CHLOROPLASTIC"/>
    <property type="match status" value="1"/>
</dbReference>
<dbReference type="Pfam" id="PF13292">
    <property type="entry name" value="DXP_synthase_N"/>
    <property type="match status" value="1"/>
</dbReference>
<dbReference type="Pfam" id="PF02779">
    <property type="entry name" value="Transket_pyr"/>
    <property type="match status" value="1"/>
</dbReference>
<dbReference type="Pfam" id="PF02780">
    <property type="entry name" value="Transketolase_C"/>
    <property type="match status" value="1"/>
</dbReference>
<dbReference type="SMART" id="SM00861">
    <property type="entry name" value="Transket_pyr"/>
    <property type="match status" value="1"/>
</dbReference>
<dbReference type="SUPFAM" id="SSF52518">
    <property type="entry name" value="Thiamin diphosphate-binding fold (THDP-binding)"/>
    <property type="match status" value="2"/>
</dbReference>
<dbReference type="SUPFAM" id="SSF52922">
    <property type="entry name" value="TK C-terminal domain-like"/>
    <property type="match status" value="1"/>
</dbReference>
<dbReference type="PROSITE" id="PS00801">
    <property type="entry name" value="TRANSKETOLASE_1"/>
    <property type="match status" value="1"/>
</dbReference>
<dbReference type="PROSITE" id="PS00802">
    <property type="entry name" value="TRANSKETOLASE_2"/>
    <property type="match status" value="1"/>
</dbReference>
<keyword id="KW-0414">Isoprene biosynthesis</keyword>
<keyword id="KW-0460">Magnesium</keyword>
<keyword id="KW-0479">Metal-binding</keyword>
<keyword id="KW-1185">Reference proteome</keyword>
<keyword id="KW-0784">Thiamine biosynthesis</keyword>
<keyword id="KW-0786">Thiamine pyrophosphate</keyword>
<keyword id="KW-0808">Transferase</keyword>
<proteinExistence type="inferred from homology"/>
<protein>
    <recommendedName>
        <fullName evidence="1">1-deoxy-D-xylulose-5-phosphate synthase</fullName>
        <ecNumber evidence="1">2.2.1.7</ecNumber>
    </recommendedName>
    <alternativeName>
        <fullName evidence="1">1-deoxyxylulose-5-phosphate synthase</fullName>
        <shortName evidence="1">DXP synthase</shortName>
        <shortName evidence="1">DXPS</shortName>
    </alternativeName>
</protein>
<reference key="1">
    <citation type="journal article" date="2007" name="Genome Res.">
        <title>Genome characteristics of facultatively symbiotic Frankia sp. strains reflect host range and host plant biogeography.</title>
        <authorList>
            <person name="Normand P."/>
            <person name="Lapierre P."/>
            <person name="Tisa L.S."/>
            <person name="Gogarten J.P."/>
            <person name="Alloisio N."/>
            <person name="Bagnarol E."/>
            <person name="Bassi C.A."/>
            <person name="Berry A.M."/>
            <person name="Bickhart D.M."/>
            <person name="Choisne N."/>
            <person name="Couloux A."/>
            <person name="Cournoyer B."/>
            <person name="Cruveiller S."/>
            <person name="Daubin V."/>
            <person name="Demange N."/>
            <person name="Francino M.P."/>
            <person name="Goltsman E."/>
            <person name="Huang Y."/>
            <person name="Kopp O.R."/>
            <person name="Labarre L."/>
            <person name="Lapidus A."/>
            <person name="Lavire C."/>
            <person name="Marechal J."/>
            <person name="Martinez M."/>
            <person name="Mastronunzio J.E."/>
            <person name="Mullin B.C."/>
            <person name="Niemann J."/>
            <person name="Pujic P."/>
            <person name="Rawnsley T."/>
            <person name="Rouy Z."/>
            <person name="Schenowitz C."/>
            <person name="Sellstedt A."/>
            <person name="Tavares F."/>
            <person name="Tomkins J.P."/>
            <person name="Vallenet D."/>
            <person name="Valverde C."/>
            <person name="Wall L.G."/>
            <person name="Wang Y."/>
            <person name="Medigue C."/>
            <person name="Benson D.R."/>
        </authorList>
    </citation>
    <scope>NUCLEOTIDE SEQUENCE [LARGE SCALE GENOMIC DNA]</scope>
    <source>
        <strain>DSM 45818 / CECT 9043 / HFP020203 / CcI3</strain>
    </source>
</reference>
<evidence type="ECO:0000255" key="1">
    <source>
        <dbReference type="HAMAP-Rule" id="MF_00315"/>
    </source>
</evidence>
<evidence type="ECO:0000256" key="2">
    <source>
        <dbReference type="SAM" id="MobiDB-lite"/>
    </source>
</evidence>